<dbReference type="EC" id="2.7.8.7" evidence="1"/>
<dbReference type="EMBL" id="CP000024">
    <property type="protein sequence ID" value="AAV63246.1"/>
    <property type="molecule type" value="Genomic_DNA"/>
</dbReference>
<dbReference type="RefSeq" id="WP_002951878.1">
    <property type="nucleotide sequence ID" value="NC_006449.1"/>
</dbReference>
<dbReference type="SMR" id="Q5LY70"/>
<dbReference type="GeneID" id="66899464"/>
<dbReference type="KEGG" id="stc:str1727"/>
<dbReference type="HOGENOM" id="CLU_089696_1_2_9"/>
<dbReference type="GO" id="GO:0005737">
    <property type="term" value="C:cytoplasm"/>
    <property type="evidence" value="ECO:0007669"/>
    <property type="project" value="UniProtKB-SubCell"/>
</dbReference>
<dbReference type="GO" id="GO:0008897">
    <property type="term" value="F:holo-[acyl-carrier-protein] synthase activity"/>
    <property type="evidence" value="ECO:0007669"/>
    <property type="project" value="UniProtKB-UniRule"/>
</dbReference>
<dbReference type="GO" id="GO:0000287">
    <property type="term" value="F:magnesium ion binding"/>
    <property type="evidence" value="ECO:0007669"/>
    <property type="project" value="UniProtKB-UniRule"/>
</dbReference>
<dbReference type="GO" id="GO:0006633">
    <property type="term" value="P:fatty acid biosynthetic process"/>
    <property type="evidence" value="ECO:0007669"/>
    <property type="project" value="UniProtKB-UniRule"/>
</dbReference>
<dbReference type="Gene3D" id="3.90.470.20">
    <property type="entry name" value="4'-phosphopantetheinyl transferase domain"/>
    <property type="match status" value="1"/>
</dbReference>
<dbReference type="HAMAP" id="MF_00101">
    <property type="entry name" value="AcpS"/>
    <property type="match status" value="1"/>
</dbReference>
<dbReference type="InterPro" id="IPR008278">
    <property type="entry name" value="4-PPantetheinyl_Trfase_dom"/>
</dbReference>
<dbReference type="InterPro" id="IPR037143">
    <property type="entry name" value="4-PPantetheinyl_Trfase_dom_sf"/>
</dbReference>
<dbReference type="InterPro" id="IPR002582">
    <property type="entry name" value="ACPS"/>
</dbReference>
<dbReference type="InterPro" id="IPR004568">
    <property type="entry name" value="Ppantetheine-prot_Trfase_dom"/>
</dbReference>
<dbReference type="NCBIfam" id="TIGR00516">
    <property type="entry name" value="acpS"/>
    <property type="match status" value="1"/>
</dbReference>
<dbReference type="NCBIfam" id="TIGR00556">
    <property type="entry name" value="pantethn_trn"/>
    <property type="match status" value="1"/>
</dbReference>
<dbReference type="Pfam" id="PF01648">
    <property type="entry name" value="ACPS"/>
    <property type="match status" value="1"/>
</dbReference>
<dbReference type="SUPFAM" id="SSF56214">
    <property type="entry name" value="4'-phosphopantetheinyl transferase"/>
    <property type="match status" value="1"/>
</dbReference>
<evidence type="ECO:0000255" key="1">
    <source>
        <dbReference type="HAMAP-Rule" id="MF_00101"/>
    </source>
</evidence>
<protein>
    <recommendedName>
        <fullName evidence="1">Holo-[acyl-carrier-protein] synthase</fullName>
        <shortName evidence="1">Holo-ACP synthase</shortName>
        <ecNumber evidence="1">2.7.8.7</ecNumber>
    </recommendedName>
    <alternativeName>
        <fullName evidence="1">4'-phosphopantetheinyl transferase AcpS</fullName>
    </alternativeName>
</protein>
<proteinExistence type="inferred from homology"/>
<sequence>MIFGHGIDLQEISAVKKAYDRNPRFAKKVLTPKEWERFESLSGERQMSFLAGRWAGKEAFSKAWGTGIGAVGFKDIEILNNDKGAPVVTQSPFEGNVFISISHSGDFVQASVILEKTKR</sequence>
<keyword id="KW-0963">Cytoplasm</keyword>
<keyword id="KW-0275">Fatty acid biosynthesis</keyword>
<keyword id="KW-0276">Fatty acid metabolism</keyword>
<keyword id="KW-0444">Lipid biosynthesis</keyword>
<keyword id="KW-0443">Lipid metabolism</keyword>
<keyword id="KW-0460">Magnesium</keyword>
<keyword id="KW-0479">Metal-binding</keyword>
<keyword id="KW-0808">Transferase</keyword>
<reference key="1">
    <citation type="journal article" date="2004" name="Nat. Biotechnol.">
        <title>Complete sequence and comparative genome analysis of the dairy bacterium Streptococcus thermophilus.</title>
        <authorList>
            <person name="Bolotin A."/>
            <person name="Quinquis B."/>
            <person name="Renault P."/>
            <person name="Sorokin A."/>
            <person name="Ehrlich S.D."/>
            <person name="Kulakauskas S."/>
            <person name="Lapidus A."/>
            <person name="Goltsman E."/>
            <person name="Mazur M."/>
            <person name="Pusch G.D."/>
            <person name="Fonstein M."/>
            <person name="Overbeek R."/>
            <person name="Kyprides N."/>
            <person name="Purnelle B."/>
            <person name="Prozzi D."/>
            <person name="Ngui K."/>
            <person name="Masuy D."/>
            <person name="Hancy F."/>
            <person name="Burteau S."/>
            <person name="Boutry M."/>
            <person name="Delcour J."/>
            <person name="Goffeau A."/>
            <person name="Hols P."/>
        </authorList>
    </citation>
    <scope>NUCLEOTIDE SEQUENCE [LARGE SCALE GENOMIC DNA]</scope>
    <source>
        <strain>CNRZ 1066</strain>
    </source>
</reference>
<gene>
    <name evidence="1" type="primary">acpS</name>
    <name type="ordered locus">str1727</name>
</gene>
<organism>
    <name type="scientific">Streptococcus thermophilus (strain CNRZ 1066)</name>
    <dbReference type="NCBI Taxonomy" id="299768"/>
    <lineage>
        <taxon>Bacteria</taxon>
        <taxon>Bacillati</taxon>
        <taxon>Bacillota</taxon>
        <taxon>Bacilli</taxon>
        <taxon>Lactobacillales</taxon>
        <taxon>Streptococcaceae</taxon>
        <taxon>Streptococcus</taxon>
    </lineage>
</organism>
<name>ACPS_STRT1</name>
<accession>Q5LY70</accession>
<feature type="chain" id="PRO_0000228313" description="Holo-[acyl-carrier-protein] synthase">
    <location>
        <begin position="1"/>
        <end position="119"/>
    </location>
</feature>
<feature type="binding site" evidence="1">
    <location>
        <position position="8"/>
    </location>
    <ligand>
        <name>Mg(2+)</name>
        <dbReference type="ChEBI" id="CHEBI:18420"/>
    </ligand>
</feature>
<feature type="binding site" evidence="1">
    <location>
        <position position="58"/>
    </location>
    <ligand>
        <name>Mg(2+)</name>
        <dbReference type="ChEBI" id="CHEBI:18420"/>
    </ligand>
</feature>
<comment type="function">
    <text evidence="1">Transfers the 4'-phosphopantetheine moiety from coenzyme A to a Ser of acyl-carrier-protein.</text>
</comment>
<comment type="catalytic activity">
    <reaction evidence="1">
        <text>apo-[ACP] + CoA = holo-[ACP] + adenosine 3',5'-bisphosphate + H(+)</text>
        <dbReference type="Rhea" id="RHEA:12068"/>
        <dbReference type="Rhea" id="RHEA-COMP:9685"/>
        <dbReference type="Rhea" id="RHEA-COMP:9690"/>
        <dbReference type="ChEBI" id="CHEBI:15378"/>
        <dbReference type="ChEBI" id="CHEBI:29999"/>
        <dbReference type="ChEBI" id="CHEBI:57287"/>
        <dbReference type="ChEBI" id="CHEBI:58343"/>
        <dbReference type="ChEBI" id="CHEBI:64479"/>
        <dbReference type="EC" id="2.7.8.7"/>
    </reaction>
</comment>
<comment type="cofactor">
    <cofactor evidence="1">
        <name>Mg(2+)</name>
        <dbReference type="ChEBI" id="CHEBI:18420"/>
    </cofactor>
</comment>
<comment type="subcellular location">
    <subcellularLocation>
        <location evidence="1">Cytoplasm</location>
    </subcellularLocation>
</comment>
<comment type="similarity">
    <text evidence="1">Belongs to the P-Pant transferase superfamily. AcpS family.</text>
</comment>